<comment type="function">
    <text evidence="1">Bifunctional enzyme that catalyzes the enolization of 2,3-diketo-5-methylthiopentyl-1-phosphate (DK-MTP-1-P) into the intermediate 2-hydroxy-3-keto-5-methylthiopentenyl-1-phosphate (HK-MTPenyl-1-P), which is then dephosphorylated to form the acireductone 1,2-dihydroxy-3-keto-5-methylthiopentene (DHK-MTPene).</text>
</comment>
<comment type="catalytic activity">
    <reaction evidence="1">
        <text>5-methylsulfanyl-2,3-dioxopentyl phosphate + H2O = 1,2-dihydroxy-5-(methylsulfanyl)pent-1-en-3-one + phosphate</text>
        <dbReference type="Rhea" id="RHEA:21700"/>
        <dbReference type="ChEBI" id="CHEBI:15377"/>
        <dbReference type="ChEBI" id="CHEBI:43474"/>
        <dbReference type="ChEBI" id="CHEBI:49252"/>
        <dbReference type="ChEBI" id="CHEBI:58828"/>
        <dbReference type="EC" id="3.1.3.77"/>
    </reaction>
</comment>
<comment type="cofactor">
    <cofactor evidence="1">
        <name>Mg(2+)</name>
        <dbReference type="ChEBI" id="CHEBI:18420"/>
    </cofactor>
    <text evidence="1">Binds 1 Mg(2+) ion per subunit.</text>
</comment>
<comment type="pathway">
    <text evidence="1">Amino-acid biosynthesis; L-methionine biosynthesis via salvage pathway; L-methionine from S-methyl-5-thio-alpha-D-ribose 1-phosphate: step 3/6.</text>
</comment>
<comment type="pathway">
    <text evidence="1">Amino-acid biosynthesis; L-methionine biosynthesis via salvage pathway; L-methionine from S-methyl-5-thio-alpha-D-ribose 1-phosphate: step 4/6.</text>
</comment>
<comment type="subunit">
    <text evidence="1">Monomer.</text>
</comment>
<comment type="similarity">
    <text evidence="1">Belongs to the HAD-like hydrolase superfamily. MasA/MtnC family.</text>
</comment>
<name>MTNC_LEPIN</name>
<protein>
    <recommendedName>
        <fullName evidence="1">Enolase-phosphatase E1</fullName>
        <ecNumber evidence="1">3.1.3.77</ecNumber>
    </recommendedName>
    <alternativeName>
        <fullName evidence="1">2,3-diketo-5-methylthio-1-phosphopentane phosphatase</fullName>
    </alternativeName>
</protein>
<sequence length="234" mass="26678">MNIKTFEFYLFDIEGTTTPIEFVHKILFPYSVEKFDSFFQSNLLEKEWIEKLILEGKNDTTYSGKLSDSAFDLSEYCKHLVSLDRKSGILKEIQGRIWKSGYENGELKSSMFSDVPSFLKKIQASKKKSAVYSSGSIQAQKLIFEYSDFGNLTHFFYAYFDTGVGGKRESSSYSKISEQLGVAPEKILFFTDIKEEADAAKEAKLHSAILERPGNYPQPQHSHFKISSFEGLNP</sequence>
<reference key="1">
    <citation type="journal article" date="2003" name="Nature">
        <title>Unique physiological and pathogenic features of Leptospira interrogans revealed by whole-genome sequencing.</title>
        <authorList>
            <person name="Ren S.-X."/>
            <person name="Fu G."/>
            <person name="Jiang X.-G."/>
            <person name="Zeng R."/>
            <person name="Miao Y.-G."/>
            <person name="Xu H."/>
            <person name="Zhang Y.-X."/>
            <person name="Xiong H."/>
            <person name="Lu G."/>
            <person name="Lu L.-F."/>
            <person name="Jiang H.-Q."/>
            <person name="Jia J."/>
            <person name="Tu Y.-F."/>
            <person name="Jiang J.-X."/>
            <person name="Gu W.-Y."/>
            <person name="Zhang Y.-Q."/>
            <person name="Cai Z."/>
            <person name="Sheng H.-H."/>
            <person name="Yin H.-F."/>
            <person name="Zhang Y."/>
            <person name="Zhu G.-F."/>
            <person name="Wan M."/>
            <person name="Huang H.-L."/>
            <person name="Qian Z."/>
            <person name="Wang S.-Y."/>
            <person name="Ma W."/>
            <person name="Yao Z.-J."/>
            <person name="Shen Y."/>
            <person name="Qiang B.-Q."/>
            <person name="Xia Q.-C."/>
            <person name="Guo X.-K."/>
            <person name="Danchin A."/>
            <person name="Saint Girons I."/>
            <person name="Somerville R.L."/>
            <person name="Wen Y.-M."/>
            <person name="Shi M.-H."/>
            <person name="Chen Z."/>
            <person name="Xu J.-G."/>
            <person name="Zhao G.-P."/>
        </authorList>
    </citation>
    <scope>NUCLEOTIDE SEQUENCE [LARGE SCALE GENOMIC DNA]</scope>
    <source>
        <strain>56601</strain>
    </source>
</reference>
<organism>
    <name type="scientific">Leptospira interrogans serogroup Icterohaemorrhagiae serovar Lai (strain 56601)</name>
    <dbReference type="NCBI Taxonomy" id="189518"/>
    <lineage>
        <taxon>Bacteria</taxon>
        <taxon>Pseudomonadati</taxon>
        <taxon>Spirochaetota</taxon>
        <taxon>Spirochaetia</taxon>
        <taxon>Leptospirales</taxon>
        <taxon>Leptospiraceae</taxon>
        <taxon>Leptospira</taxon>
    </lineage>
</organism>
<proteinExistence type="inferred from homology"/>
<gene>
    <name evidence="1" type="primary">mtnC</name>
    <name type="ordered locus">LA_0929</name>
</gene>
<accession>Q8F7L5</accession>
<feature type="chain" id="PRO_0000357379" description="Enolase-phosphatase E1">
    <location>
        <begin position="1"/>
        <end position="234"/>
    </location>
</feature>
<feature type="region of interest" description="Disordered" evidence="2">
    <location>
        <begin position="212"/>
        <end position="234"/>
    </location>
</feature>
<dbReference type="EC" id="3.1.3.77" evidence="1"/>
<dbReference type="EMBL" id="AE010300">
    <property type="protein sequence ID" value="AAN48128.1"/>
    <property type="molecule type" value="Genomic_DNA"/>
</dbReference>
<dbReference type="RefSeq" id="NP_711110.1">
    <property type="nucleotide sequence ID" value="NC_004342.2"/>
</dbReference>
<dbReference type="RefSeq" id="WP_001022662.1">
    <property type="nucleotide sequence ID" value="NC_004342.2"/>
</dbReference>
<dbReference type="SMR" id="Q8F7L5"/>
<dbReference type="STRING" id="189518.LA_0929"/>
<dbReference type="PaxDb" id="189518-LA_0929"/>
<dbReference type="EnsemblBacteria" id="AAN48128">
    <property type="protein sequence ID" value="AAN48128"/>
    <property type="gene ID" value="LA_0929"/>
</dbReference>
<dbReference type="GeneID" id="61142598"/>
<dbReference type="KEGG" id="lil:LA_0929"/>
<dbReference type="PATRIC" id="fig|189518.3.peg.930"/>
<dbReference type="HOGENOM" id="CLU_023273_0_0_12"/>
<dbReference type="InParanoid" id="Q8F7L5"/>
<dbReference type="OrthoDB" id="9797416at2"/>
<dbReference type="UniPathway" id="UPA00904">
    <property type="reaction ID" value="UER00876"/>
</dbReference>
<dbReference type="UniPathway" id="UPA00904">
    <property type="reaction ID" value="UER00877"/>
</dbReference>
<dbReference type="Proteomes" id="UP000001408">
    <property type="component" value="Chromosome I"/>
</dbReference>
<dbReference type="GO" id="GO:0043715">
    <property type="term" value="F:2,3-diketo-5-methylthiopentyl-1-phosphate enolase activity"/>
    <property type="evidence" value="ECO:0007669"/>
    <property type="project" value="UniProtKB-UniRule"/>
</dbReference>
<dbReference type="GO" id="GO:0043716">
    <property type="term" value="F:2-hydroxy-3-keto-5-methylthiopentenyl-1-phosphate phosphatase activity"/>
    <property type="evidence" value="ECO:0007669"/>
    <property type="project" value="UniProtKB-UniRule"/>
</dbReference>
<dbReference type="GO" id="GO:0043874">
    <property type="term" value="F:acireductone synthase activity"/>
    <property type="evidence" value="ECO:0000318"/>
    <property type="project" value="GO_Central"/>
</dbReference>
<dbReference type="GO" id="GO:0000287">
    <property type="term" value="F:magnesium ion binding"/>
    <property type="evidence" value="ECO:0007669"/>
    <property type="project" value="UniProtKB-UniRule"/>
</dbReference>
<dbReference type="GO" id="GO:0019509">
    <property type="term" value="P:L-methionine salvage from methylthioadenosine"/>
    <property type="evidence" value="ECO:0000318"/>
    <property type="project" value="GO_Central"/>
</dbReference>
<dbReference type="CDD" id="cd01629">
    <property type="entry name" value="HAD_EP"/>
    <property type="match status" value="1"/>
</dbReference>
<dbReference type="FunFam" id="3.40.50.1000:FF:000079">
    <property type="entry name" value="Enolase-phosphatase E1"/>
    <property type="match status" value="1"/>
</dbReference>
<dbReference type="Gene3D" id="1.10.720.60">
    <property type="match status" value="1"/>
</dbReference>
<dbReference type="Gene3D" id="3.40.50.1000">
    <property type="entry name" value="HAD superfamily/HAD-like"/>
    <property type="match status" value="1"/>
</dbReference>
<dbReference type="HAMAP" id="MF_01681">
    <property type="entry name" value="Salvage_MtnC"/>
    <property type="match status" value="1"/>
</dbReference>
<dbReference type="InterPro" id="IPR023943">
    <property type="entry name" value="Enolase-ppase_E1"/>
</dbReference>
<dbReference type="InterPro" id="IPR036412">
    <property type="entry name" value="HAD-like_sf"/>
</dbReference>
<dbReference type="InterPro" id="IPR023214">
    <property type="entry name" value="HAD_sf"/>
</dbReference>
<dbReference type="NCBIfam" id="TIGR01691">
    <property type="entry name" value="enolase-ppase"/>
    <property type="match status" value="1"/>
</dbReference>
<dbReference type="PANTHER" id="PTHR20371">
    <property type="entry name" value="ENOLASE-PHOSPHATASE E1"/>
    <property type="match status" value="1"/>
</dbReference>
<dbReference type="PANTHER" id="PTHR20371:SF1">
    <property type="entry name" value="ENOLASE-PHOSPHATASE E1"/>
    <property type="match status" value="1"/>
</dbReference>
<dbReference type="Pfam" id="PF00702">
    <property type="entry name" value="Hydrolase"/>
    <property type="match status" value="1"/>
</dbReference>
<dbReference type="SFLD" id="SFLDF00044">
    <property type="entry name" value="enolase-phosphatase"/>
    <property type="match status" value="1"/>
</dbReference>
<dbReference type="SFLD" id="SFLDS00003">
    <property type="entry name" value="Haloacid_Dehalogenase"/>
    <property type="match status" value="1"/>
</dbReference>
<dbReference type="SUPFAM" id="SSF56784">
    <property type="entry name" value="HAD-like"/>
    <property type="match status" value="1"/>
</dbReference>
<keyword id="KW-0028">Amino-acid biosynthesis</keyword>
<keyword id="KW-0378">Hydrolase</keyword>
<keyword id="KW-0460">Magnesium</keyword>
<keyword id="KW-0479">Metal-binding</keyword>
<keyword id="KW-0486">Methionine biosynthesis</keyword>
<keyword id="KW-1185">Reference proteome</keyword>
<evidence type="ECO:0000255" key="1">
    <source>
        <dbReference type="HAMAP-Rule" id="MF_01681"/>
    </source>
</evidence>
<evidence type="ECO:0000256" key="2">
    <source>
        <dbReference type="SAM" id="MobiDB-lite"/>
    </source>
</evidence>